<accession>Q9PTY0</accession>
<evidence type="ECO:0000250" key="1">
    <source>
        <dbReference type="UniProtKB" id="P00829"/>
    </source>
</evidence>
<evidence type="ECO:0000250" key="2">
    <source>
        <dbReference type="UniProtKB" id="P06576"/>
    </source>
</evidence>
<evidence type="ECO:0000250" key="3">
    <source>
        <dbReference type="UniProtKB" id="P19483"/>
    </source>
</evidence>
<evidence type="ECO:0000255" key="4"/>
<evidence type="ECO:0000305" key="5"/>
<comment type="function">
    <text evidence="2 3">Catalytic subunit beta, of the mitochondrial membrane ATP synthase complex (F(1)F(0) ATP synthase or Complex V) that produces ATP from ADP in the presence of a proton gradient across the membrane which is generated by electron transport complexes of the respiratory chain. ATP synthase complex consist of a soluble F(1) head domain - the catalytic core - and a membrane F(1) domain - the membrane proton channel. These two domains are linked by a central stalk rotating inside the F(1) region and a stationary peripheral stalk. During catalysis, ATP synthesis in the catalytic domain of F(1) is coupled via a rotary mechanism of the central stalk subunits to proton translocation (By similarity). In vivo, can only synthesize ATP although its ATP hydrolase activity can be activated artificially in vitro (By similarity). With the subunit alpha (ATP5F1A), forms the catalytic core in the F(1) domain (By similarity).</text>
</comment>
<comment type="catalytic activity">
    <reaction evidence="1">
        <text>ATP + H2O + 4 H(+)(in) = ADP + phosphate + 5 H(+)(out)</text>
        <dbReference type="Rhea" id="RHEA:57720"/>
        <dbReference type="ChEBI" id="CHEBI:15377"/>
        <dbReference type="ChEBI" id="CHEBI:15378"/>
        <dbReference type="ChEBI" id="CHEBI:30616"/>
        <dbReference type="ChEBI" id="CHEBI:43474"/>
        <dbReference type="ChEBI" id="CHEBI:456216"/>
        <dbReference type="EC" id="7.1.2.2"/>
    </reaction>
    <physiologicalReaction direction="right-to-left" evidence="1">
        <dbReference type="Rhea" id="RHEA:57722"/>
    </physiologicalReaction>
</comment>
<comment type="subunit">
    <text evidence="2">Homotrimer. Component of the ATP synthase complex composed at least of ATP5F1A/subunit alpha, ATP5F1B/subunit beta, ATP5MC1/subunit c (homooctomer), MT-ATP6/subunit a, MT-ATP8/subunit 8, ATP5ME/subunit e, ATP5MF/subunit f, ATP5MG/subunit g, ATP5MK/subunit k, ATP5MJ/subunit j, ATP5F1C/subunit gamma, ATP5F1D/subunit delta, ATP5F1E/subunit epsilon, ATP5PF/subunit F6, ATP5PB/subunit b, ATP5PD/subunit d, ATP5PO/subunit OSCP. ATP synthase complex consists of a soluble F(1) head domain (subunits alpha(3) and beta(3)) - the catalytic core - and a membrane F(0) domain - the membrane proton channel (subunits c, a, 8, e, f, g, k and j). These two domains are linked by a central stalk (subunits gamma, delta, and epsilon) rotating inside the F1 region and a stationary peripheral stalk (subunits F6, b, d, and OSCP).</text>
</comment>
<comment type="subcellular location">
    <subcellularLocation>
        <location evidence="1">Mitochondrion inner membrane</location>
        <topology evidence="1">Peripheral membrane protein</topology>
        <orientation evidence="1">Matrix side</orientation>
    </subcellularLocation>
</comment>
<comment type="similarity">
    <text evidence="5">Belongs to the ATPase alpha/beta chains family.</text>
</comment>
<sequence length="518" mass="55247">MLGAVGRCCTGALQALRPGVTPLKALNGAPAALFSRRDYVAPAAAAAAASGRIVAVIGAVVDVQFDEDLPPILNALEVAGRDTRLVLEVAQHLGENTVRTIAMDGTEGLVRGQKVLDTGAPIRIPVGPETLGRIMNVIGEPIDERGPITTKQTAPIHAEAPEFTDMSVEQEILVTGIKVVDLLAPYAKGGKIGLFGGAGVGKTVLIMELINNVAKAHGGYSVFAGVGERTREGNDLYHEMIESGVINLKDTTSKVALVYGQMNEPPGARARVALTGLTVAEYFRDQEGQDVLLFIDNIFRFTQAGSEVSALLGRIPSAVGYQPTLATDMGTMQERITTTKKGSITSVQAIYVPADDLTDPAPATTFAHLDATTVLSRAIAELGIYPAVDPLDSTSRIMDPNIVGSEHYDVARGVQKILQDYKSLQDIIAILGMDELSEEDKLTVARARKIQRFLSQPFQVAEVFTGHLGKLVPLKDTIKGFKAILGGEYDALPEQAFYMVGPIEEVVQKAEKLAEEHS</sequence>
<dbReference type="EC" id="7.1.2.2" evidence="2"/>
<dbReference type="EMBL" id="AB023582">
    <property type="protein sequence ID" value="BAA82837.1"/>
    <property type="molecule type" value="mRNA"/>
</dbReference>
<dbReference type="SMR" id="Q9PTY0"/>
<dbReference type="Proteomes" id="UP000694384">
    <property type="component" value="Unplaced"/>
</dbReference>
<dbReference type="Proteomes" id="UP000694427">
    <property type="component" value="Unplaced"/>
</dbReference>
<dbReference type="Proteomes" id="UP000694700">
    <property type="component" value="Unplaced"/>
</dbReference>
<dbReference type="Proteomes" id="UP000694701">
    <property type="component" value="Unplaced"/>
</dbReference>
<dbReference type="Proteomes" id="UP001155660">
    <property type="component" value="Unplaced"/>
</dbReference>
<dbReference type="GO" id="GO:0005743">
    <property type="term" value="C:mitochondrial inner membrane"/>
    <property type="evidence" value="ECO:0007669"/>
    <property type="project" value="UniProtKB-SubCell"/>
</dbReference>
<dbReference type="GO" id="GO:0005739">
    <property type="term" value="C:mitochondrion"/>
    <property type="evidence" value="ECO:0000250"/>
    <property type="project" value="UniProtKB"/>
</dbReference>
<dbReference type="GO" id="GO:0045259">
    <property type="term" value="C:proton-transporting ATP synthase complex"/>
    <property type="evidence" value="ECO:0000250"/>
    <property type="project" value="UniProtKB"/>
</dbReference>
<dbReference type="GO" id="GO:0005524">
    <property type="term" value="F:ATP binding"/>
    <property type="evidence" value="ECO:0007669"/>
    <property type="project" value="UniProtKB-KW"/>
</dbReference>
<dbReference type="GO" id="GO:0016887">
    <property type="term" value="F:ATP hydrolysis activity"/>
    <property type="evidence" value="ECO:0007669"/>
    <property type="project" value="InterPro"/>
</dbReference>
<dbReference type="GO" id="GO:0046933">
    <property type="term" value="F:proton-transporting ATP synthase activity, rotational mechanism"/>
    <property type="evidence" value="ECO:0000250"/>
    <property type="project" value="UniProtKB"/>
</dbReference>
<dbReference type="GO" id="GO:0015986">
    <property type="term" value="P:proton motive force-driven ATP synthesis"/>
    <property type="evidence" value="ECO:0000250"/>
    <property type="project" value="UniProtKB"/>
</dbReference>
<dbReference type="GO" id="GO:0042776">
    <property type="term" value="P:proton motive force-driven mitochondrial ATP synthesis"/>
    <property type="evidence" value="ECO:0007669"/>
    <property type="project" value="TreeGrafter"/>
</dbReference>
<dbReference type="CDD" id="cd18110">
    <property type="entry name" value="ATP-synt_F1_beta_C"/>
    <property type="match status" value="1"/>
</dbReference>
<dbReference type="CDD" id="cd18115">
    <property type="entry name" value="ATP-synt_F1_beta_N"/>
    <property type="match status" value="1"/>
</dbReference>
<dbReference type="CDD" id="cd01133">
    <property type="entry name" value="F1-ATPase_beta_CD"/>
    <property type="match status" value="1"/>
</dbReference>
<dbReference type="FunFam" id="1.10.1140.10:FF:000001">
    <property type="entry name" value="ATP synthase subunit beta"/>
    <property type="match status" value="1"/>
</dbReference>
<dbReference type="FunFam" id="2.40.10.170:FF:000004">
    <property type="entry name" value="ATP synthase subunit beta"/>
    <property type="match status" value="1"/>
</dbReference>
<dbReference type="FunFam" id="3.40.50.12240:FF:000006">
    <property type="entry name" value="ATP synthase subunit beta"/>
    <property type="match status" value="1"/>
</dbReference>
<dbReference type="FunFam" id="3.40.50.300:FF:000026">
    <property type="entry name" value="ATP synthase subunit beta"/>
    <property type="match status" value="1"/>
</dbReference>
<dbReference type="Gene3D" id="2.40.10.170">
    <property type="match status" value="1"/>
</dbReference>
<dbReference type="Gene3D" id="1.10.1140.10">
    <property type="entry name" value="Bovine Mitochondrial F1-atpase, Atp Synthase Beta Chain, Chain D, domain 3"/>
    <property type="match status" value="1"/>
</dbReference>
<dbReference type="Gene3D" id="3.40.50.300">
    <property type="entry name" value="P-loop containing nucleotide triphosphate hydrolases"/>
    <property type="match status" value="1"/>
</dbReference>
<dbReference type="HAMAP" id="MF_01347">
    <property type="entry name" value="ATP_synth_beta_bact"/>
    <property type="match status" value="1"/>
</dbReference>
<dbReference type="InterPro" id="IPR003593">
    <property type="entry name" value="AAA+_ATPase"/>
</dbReference>
<dbReference type="InterPro" id="IPR055190">
    <property type="entry name" value="ATP-synt_VA_C"/>
</dbReference>
<dbReference type="InterPro" id="IPR005722">
    <property type="entry name" value="ATP_synth_F1_bsu"/>
</dbReference>
<dbReference type="InterPro" id="IPR020003">
    <property type="entry name" value="ATPase_a/bsu_AS"/>
</dbReference>
<dbReference type="InterPro" id="IPR050053">
    <property type="entry name" value="ATPase_alpha/beta_chains"/>
</dbReference>
<dbReference type="InterPro" id="IPR004100">
    <property type="entry name" value="ATPase_F1/V1/A1_a/bsu_N"/>
</dbReference>
<dbReference type="InterPro" id="IPR036121">
    <property type="entry name" value="ATPase_F1/V1/A1_a/bsu_N_sf"/>
</dbReference>
<dbReference type="InterPro" id="IPR000194">
    <property type="entry name" value="ATPase_F1/V1/A1_a/bsu_nucl-bd"/>
</dbReference>
<dbReference type="InterPro" id="IPR024034">
    <property type="entry name" value="ATPase_F1/V1_b/a_C"/>
</dbReference>
<dbReference type="InterPro" id="IPR027417">
    <property type="entry name" value="P-loop_NTPase"/>
</dbReference>
<dbReference type="NCBIfam" id="TIGR01039">
    <property type="entry name" value="atpD"/>
    <property type="match status" value="1"/>
</dbReference>
<dbReference type="PANTHER" id="PTHR15184">
    <property type="entry name" value="ATP SYNTHASE"/>
    <property type="match status" value="1"/>
</dbReference>
<dbReference type="PANTHER" id="PTHR15184:SF71">
    <property type="entry name" value="ATP SYNTHASE SUBUNIT BETA, MITOCHONDRIAL"/>
    <property type="match status" value="1"/>
</dbReference>
<dbReference type="Pfam" id="PF00006">
    <property type="entry name" value="ATP-synt_ab"/>
    <property type="match status" value="1"/>
</dbReference>
<dbReference type="Pfam" id="PF02874">
    <property type="entry name" value="ATP-synt_ab_N"/>
    <property type="match status" value="1"/>
</dbReference>
<dbReference type="Pfam" id="PF22919">
    <property type="entry name" value="ATP-synt_VA_C"/>
    <property type="match status" value="1"/>
</dbReference>
<dbReference type="PIRSF" id="PIRSF039072">
    <property type="entry name" value="ATPase_subunit_beta"/>
    <property type="match status" value="1"/>
</dbReference>
<dbReference type="SMART" id="SM00382">
    <property type="entry name" value="AAA"/>
    <property type="match status" value="1"/>
</dbReference>
<dbReference type="SUPFAM" id="SSF47917">
    <property type="entry name" value="C-terminal domain of alpha and beta subunits of F1 ATP synthase"/>
    <property type="match status" value="1"/>
</dbReference>
<dbReference type="SUPFAM" id="SSF50615">
    <property type="entry name" value="N-terminal domain of alpha and beta subunits of F1 ATP synthase"/>
    <property type="match status" value="1"/>
</dbReference>
<dbReference type="SUPFAM" id="SSF52540">
    <property type="entry name" value="P-loop containing nucleoside triphosphate hydrolases"/>
    <property type="match status" value="1"/>
</dbReference>
<dbReference type="PROSITE" id="PS00152">
    <property type="entry name" value="ATPASE_ALPHA_BETA"/>
    <property type="match status" value="1"/>
</dbReference>
<name>ATPB_CYPCA</name>
<protein>
    <recommendedName>
        <fullName evidence="2">ATP synthase F(1) complex catalytic subunit beta, mitochondrial</fullName>
        <ecNumber evidence="2">7.1.2.2</ecNumber>
    </recommendedName>
    <alternativeName>
        <fullName evidence="2">ATP synthase F1 subunit beta</fullName>
    </alternativeName>
</protein>
<gene>
    <name evidence="2" type="primary">ATP5F1B</name>
    <name type="synonym">atp5b</name>
</gene>
<organism>
    <name type="scientific">Cyprinus carpio</name>
    <name type="common">Common carp</name>
    <dbReference type="NCBI Taxonomy" id="7962"/>
    <lineage>
        <taxon>Eukaryota</taxon>
        <taxon>Metazoa</taxon>
        <taxon>Chordata</taxon>
        <taxon>Craniata</taxon>
        <taxon>Vertebrata</taxon>
        <taxon>Euteleostomi</taxon>
        <taxon>Actinopterygii</taxon>
        <taxon>Neopterygii</taxon>
        <taxon>Teleostei</taxon>
        <taxon>Ostariophysi</taxon>
        <taxon>Cypriniformes</taxon>
        <taxon>Cyprinidae</taxon>
        <taxon>Cyprininae</taxon>
        <taxon>Cyprinus</taxon>
    </lineage>
</organism>
<keyword id="KW-0066">ATP synthesis</keyword>
<keyword id="KW-0067">ATP-binding</keyword>
<keyword id="KW-0139">CF(1)</keyword>
<keyword id="KW-0375">Hydrogen ion transport</keyword>
<keyword id="KW-0406">Ion transport</keyword>
<keyword id="KW-0460">Magnesium</keyword>
<keyword id="KW-0472">Membrane</keyword>
<keyword id="KW-0479">Metal-binding</keyword>
<keyword id="KW-0496">Mitochondrion</keyword>
<keyword id="KW-0999">Mitochondrion inner membrane</keyword>
<keyword id="KW-0547">Nucleotide-binding</keyword>
<keyword id="KW-1185">Reference proteome</keyword>
<keyword id="KW-0809">Transit peptide</keyword>
<keyword id="KW-1278">Translocase</keyword>
<keyword id="KW-0813">Transport</keyword>
<proteinExistence type="evidence at transcript level"/>
<reference key="1">
    <citation type="journal article" date="1999" name="Fish. Sci.">
        <title>Increased levels of mitochondrial ATP synthase beta-subunit in fast skeletal muscle of carp acclimated to cold temperature.</title>
        <authorList>
            <person name="Kikuchi K."/>
            <person name="Itoi S."/>
            <person name="Watabe S."/>
        </authorList>
    </citation>
    <scope>NUCLEOTIDE SEQUENCE [MRNA]</scope>
    <source>
        <tissue>White muscle</tissue>
    </source>
</reference>
<feature type="transit peptide" description="Mitochondrion" evidence="4">
    <location>
        <begin position="1"/>
        <end status="unknown"/>
    </location>
</feature>
<feature type="chain" id="PRO_0000002446" description="ATP synthase F(1) complex catalytic subunit beta, mitochondrial">
    <location>
        <begin status="unknown"/>
        <end position="518"/>
    </location>
</feature>
<feature type="binding site" evidence="1">
    <location>
        <position position="199"/>
    </location>
    <ligand>
        <name>ADP</name>
        <dbReference type="ChEBI" id="CHEBI:456216"/>
    </ligand>
</feature>
<feature type="binding site" evidence="1">
    <location>
        <position position="199"/>
    </location>
    <ligand>
        <name>ATP</name>
        <dbReference type="ChEBI" id="CHEBI:30616"/>
    </ligand>
</feature>
<feature type="binding site" evidence="1">
    <location>
        <position position="199"/>
    </location>
    <ligand>
        <name>phosphate</name>
        <dbReference type="ChEBI" id="CHEBI:43474"/>
    </ligand>
</feature>
<feature type="binding site" evidence="1">
    <location>
        <position position="200"/>
    </location>
    <ligand>
        <name>ADP</name>
        <dbReference type="ChEBI" id="CHEBI:456216"/>
    </ligand>
</feature>
<feature type="binding site" evidence="1">
    <location>
        <position position="200"/>
    </location>
    <ligand>
        <name>phosphate</name>
        <dbReference type="ChEBI" id="CHEBI:43474"/>
    </ligand>
</feature>
<feature type="binding site" evidence="1">
    <location>
        <position position="201"/>
    </location>
    <ligand>
        <name>ADP</name>
        <dbReference type="ChEBI" id="CHEBI:456216"/>
    </ligand>
</feature>
<feature type="binding site" evidence="1">
    <location>
        <position position="201"/>
    </location>
    <ligand>
        <name>ATP</name>
        <dbReference type="ChEBI" id="CHEBI:30616"/>
    </ligand>
</feature>
<feature type="binding site" evidence="1">
    <location>
        <position position="201"/>
    </location>
    <ligand>
        <name>phosphate</name>
        <dbReference type="ChEBI" id="CHEBI:43474"/>
    </ligand>
</feature>
<feature type="binding site" evidence="1">
    <location>
        <position position="202"/>
    </location>
    <ligand>
        <name>ADP</name>
        <dbReference type="ChEBI" id="CHEBI:456216"/>
    </ligand>
</feature>
<feature type="binding site" evidence="1">
    <location>
        <position position="202"/>
    </location>
    <ligand>
        <name>ATP</name>
        <dbReference type="ChEBI" id="CHEBI:30616"/>
    </ligand>
</feature>
<feature type="binding site" evidence="1">
    <location>
        <position position="202"/>
    </location>
    <ligand>
        <name>phosphate</name>
        <dbReference type="ChEBI" id="CHEBI:43474"/>
    </ligand>
</feature>
<feature type="binding site" evidence="1">
    <location>
        <position position="203"/>
    </location>
    <ligand>
        <name>ADP</name>
        <dbReference type="ChEBI" id="CHEBI:456216"/>
    </ligand>
</feature>
<feature type="binding site" evidence="1">
    <location>
        <position position="203"/>
    </location>
    <ligand>
        <name>ATP</name>
        <dbReference type="ChEBI" id="CHEBI:30616"/>
    </ligand>
</feature>
<feature type="binding site" evidence="1">
    <location>
        <position position="203"/>
    </location>
    <ligand>
        <name>Mg(2+)</name>
        <dbReference type="ChEBI" id="CHEBI:18420"/>
        <label>1</label>
        <note>ligand shared between two neighboring subunits</note>
    </ligand>
</feature>
<feature type="binding site" evidence="1">
    <location>
        <position position="203"/>
    </location>
    <ligand>
        <name>phosphate</name>
        <dbReference type="ChEBI" id="CHEBI:43474"/>
    </ligand>
</feature>
<feature type="binding site" evidence="1">
    <location>
        <position position="204"/>
    </location>
    <ligand>
        <name>ADP</name>
        <dbReference type="ChEBI" id="CHEBI:456216"/>
    </ligand>
</feature>
<feature type="binding site" evidence="1">
    <location>
        <position position="204"/>
    </location>
    <ligand>
        <name>ATP</name>
        <dbReference type="ChEBI" id="CHEBI:30616"/>
    </ligand>
</feature>
<feature type="binding site" evidence="1">
    <location>
        <position position="228"/>
    </location>
    <ligand>
        <name>Mg(2+)</name>
        <dbReference type="ChEBI" id="CHEBI:18420"/>
        <label>2</label>
        <note>ligand shared between two neighboring subunits</note>
    </ligand>
</feature>
<feature type="binding site" evidence="1">
    <location>
        <position position="229"/>
    </location>
    <ligand>
        <name>ATP</name>
        <dbReference type="ChEBI" id="CHEBI:30616"/>
    </ligand>
</feature>